<comment type="subcellular location">
    <subcellularLocation>
        <location evidence="3">Membrane</location>
        <topology evidence="3">Multi-pass membrane protein</topology>
    </subcellularLocation>
</comment>
<comment type="similarity">
    <text evidence="3">Belongs to the ST7 family.</text>
</comment>
<evidence type="ECO:0000250" key="1">
    <source>
        <dbReference type="UniProtKB" id="Q9NRC1"/>
    </source>
</evidence>
<evidence type="ECO:0000255" key="2"/>
<evidence type="ECO:0000305" key="3"/>
<reference key="1">
    <citation type="submission" date="2006-09" db="EMBL/GenBank/DDBJ databases">
        <title>NISC comparative sequencing initiative.</title>
        <authorList>
            <person name="Antonellis A."/>
            <person name="Ayele K."/>
            <person name="Benjamin B."/>
            <person name="Blakesley R.W."/>
            <person name="Boakye A."/>
            <person name="Bouffard G.G."/>
            <person name="Brinkley C."/>
            <person name="Brooks S."/>
            <person name="Chu G."/>
            <person name="Coleman H."/>
            <person name="Engle J."/>
            <person name="Gestole M."/>
            <person name="Greene A."/>
            <person name="Guan X."/>
            <person name="Gupta J."/>
            <person name="Haghighi P."/>
            <person name="Han J."/>
            <person name="Hansen N."/>
            <person name="Ho S.-L."/>
            <person name="Hu P."/>
            <person name="Hunter G."/>
            <person name="Hurle B."/>
            <person name="Idol J.R."/>
            <person name="Kwong P."/>
            <person name="Laric P."/>
            <person name="Larson S."/>
            <person name="Lee-Lin S.-Q."/>
            <person name="Legaspi R."/>
            <person name="Madden M."/>
            <person name="Maduro Q.L."/>
            <person name="Maduro V.B."/>
            <person name="Margulies E.H."/>
            <person name="Masiello C."/>
            <person name="Maskeri B."/>
            <person name="McDowell J."/>
            <person name="Mojidi H.A."/>
            <person name="Mullikin J.C."/>
            <person name="Oestreicher J.S."/>
            <person name="Park M."/>
            <person name="Portnoy M.E."/>
            <person name="Prasad A."/>
            <person name="Puri O."/>
            <person name="Reddix-Dugue N."/>
            <person name="Schandler K."/>
            <person name="Schueler M.G."/>
            <person name="Sison C."/>
            <person name="Stantripop S."/>
            <person name="Stephen E."/>
            <person name="Taye A."/>
            <person name="Thomas J.W."/>
            <person name="Thomas P.J."/>
            <person name="Tsipouri V."/>
            <person name="Ung L."/>
            <person name="Vogt J.L."/>
            <person name="Wetherby K.D."/>
            <person name="Young A."/>
            <person name="Green E.D."/>
        </authorList>
    </citation>
    <scope>NUCLEOTIDE SEQUENCE [LARGE SCALE GENOMIC DNA]</scope>
</reference>
<accession>Q09YJ7</accession>
<gene>
    <name type="primary">ST7</name>
</gene>
<organism>
    <name type="scientific">Muntiacus muntjak</name>
    <name type="common">Barking deer</name>
    <name type="synonym">Indian muntjac</name>
    <dbReference type="NCBI Taxonomy" id="9888"/>
    <lineage>
        <taxon>Eukaryota</taxon>
        <taxon>Metazoa</taxon>
        <taxon>Chordata</taxon>
        <taxon>Craniata</taxon>
        <taxon>Vertebrata</taxon>
        <taxon>Euteleostomi</taxon>
        <taxon>Mammalia</taxon>
        <taxon>Eutheria</taxon>
        <taxon>Laurasiatheria</taxon>
        <taxon>Artiodactyla</taxon>
        <taxon>Ruminantia</taxon>
        <taxon>Pecora</taxon>
        <taxon>Cervidae</taxon>
        <taxon>Muntiacinae</taxon>
        <taxon>Muntiacus</taxon>
    </lineage>
</organism>
<sequence length="585" mass="67153">MAEAGTGFLEQLKSCIVWSWTYLWTVWFFIVLFLVYILRVPLKINDNLSTVSMFLNTLTPKFYVALTGTSSLISGLILIFEWWYFRKYGTSFIEQVSVSHLRPLLGGVDNNSSNNSNSSNGDSDSNRQSVSECKVWRNPLNLFRGAEYNRYTWVTGREPLTYYDMNLSAQDHQTFFTCDSDHLRPADAIMQKAWRERNPQARISAAHEALEINEIRSRVEVPLIASSTIWEIKLLPKCATAYILLAEEEATTIAEAEKLFKQALKAGDGCYRRSQQLQHHGSQYEAQHRRDTNVLVYIKRRLAMCARRLGRTREAVKMMRDLMKEFPLLSMFNIHENLLEALLELQAYADVQAVLAKYDDISLPKSATICYTAALLKARAVSDKFSPEAASRRGLSTAEMNAVEAIHRAVEFNPHVPKYLLEMKSLILPPEHILKRGDSEAIAYAFFHLAHWKRVEGALNLLHCTWEGTFRMIPYPLEKGHLFYPYPICTETADRELLPSFHEVSVYPKKELPFFILFTAGLCSFTAMLALLTHQFPELMGVFAKAMIDIFCSAEFRDWNCESIFMRVEDELEIPPAPQSQHFQN</sequence>
<dbReference type="EMBL" id="DP000178">
    <property type="protein sequence ID" value="ABI75283.1"/>
    <property type="molecule type" value="Genomic_DNA"/>
</dbReference>
<dbReference type="GlyCosmos" id="Q09YJ7">
    <property type="glycosylation" value="1 site, No reported glycans"/>
</dbReference>
<dbReference type="GO" id="GO:0016020">
    <property type="term" value="C:membrane"/>
    <property type="evidence" value="ECO:0007669"/>
    <property type="project" value="UniProtKB-SubCell"/>
</dbReference>
<dbReference type="CDD" id="cd11557">
    <property type="entry name" value="ST7"/>
    <property type="match status" value="1"/>
</dbReference>
<dbReference type="InterPro" id="IPR007311">
    <property type="entry name" value="ST7"/>
</dbReference>
<dbReference type="PANTHER" id="PTHR12745">
    <property type="entry name" value="SUPPRESSION OF TUMORIGENICITY 7"/>
    <property type="match status" value="1"/>
</dbReference>
<dbReference type="PANTHER" id="PTHR12745:SF10">
    <property type="entry name" value="SUPPRESSOR OF TUMORIGENICITY 7 PROTEIN"/>
    <property type="match status" value="1"/>
</dbReference>
<dbReference type="Pfam" id="PF04184">
    <property type="entry name" value="ST7"/>
    <property type="match status" value="1"/>
</dbReference>
<keyword id="KW-0325">Glycoprotein</keyword>
<keyword id="KW-0472">Membrane</keyword>
<keyword id="KW-0597">Phosphoprotein</keyword>
<keyword id="KW-0812">Transmembrane</keyword>
<keyword id="KW-1133">Transmembrane helix</keyword>
<proteinExistence type="inferred from homology"/>
<name>ST7_MUNMU</name>
<protein>
    <recommendedName>
        <fullName>Suppressor of tumorigenicity 7 protein</fullName>
    </recommendedName>
</protein>
<feature type="chain" id="PRO_0000339208" description="Suppressor of tumorigenicity 7 protein">
    <location>
        <begin position="1"/>
        <end position="585"/>
    </location>
</feature>
<feature type="transmembrane region" description="Helical" evidence="2">
    <location>
        <begin position="15"/>
        <end position="35"/>
    </location>
</feature>
<feature type="transmembrane region" description="Helical" evidence="2">
    <location>
        <begin position="62"/>
        <end position="82"/>
    </location>
</feature>
<feature type="transmembrane region" description="Helical" evidence="2">
    <location>
        <begin position="512"/>
        <end position="532"/>
    </location>
</feature>
<feature type="modified residue" description="Phosphoserine" evidence="1">
    <location>
        <position position="386"/>
    </location>
</feature>
<feature type="glycosylation site" description="N-linked (GlcNAc...) asparagine" evidence="2">
    <location>
        <position position="47"/>
    </location>
</feature>